<organism>
    <name type="scientific">Pseudomonas savastanoi pv. phaseolicola (strain 1448A / Race 6)</name>
    <name type="common">Pseudomonas syringae pv. phaseolicola (strain 1448A / Race 6)</name>
    <dbReference type="NCBI Taxonomy" id="264730"/>
    <lineage>
        <taxon>Bacteria</taxon>
        <taxon>Pseudomonadati</taxon>
        <taxon>Pseudomonadota</taxon>
        <taxon>Gammaproteobacteria</taxon>
        <taxon>Pseudomonadales</taxon>
        <taxon>Pseudomonadaceae</taxon>
        <taxon>Pseudomonas</taxon>
    </lineage>
</organism>
<proteinExistence type="inferred from homology"/>
<gene>
    <name type="ordered locus">PSPPH_4413</name>
</gene>
<evidence type="ECO:0000255" key="1">
    <source>
        <dbReference type="HAMAP-Rule" id="MF_00527"/>
    </source>
</evidence>
<keyword id="KW-0227">DNA damage</keyword>
<keyword id="KW-0234">DNA repair</keyword>
<keyword id="KW-0378">Hydrolase</keyword>
<sequence length="223" mass="24975">MPAALPDHFFHRDAQLLARDLLGKVIRHKVGELWLAARIIETEAYYCAEKGSHASLGYTEKRKALFLDGGHIYMYYARGGDSLNFSAEGPGNAVLIKSAFPWTDATSDENALAQMQLNNPDASGAIRPPQRLCAGQTLLCKALGLKVPEWDARRFDPQRLLVEDIGQAPERIIQTTRLGIPAGRDEHLMYRFVDAGYARFCTRNPLRRGQVEGRDYLFLDQGN</sequence>
<name>3MGH_PSE14</name>
<protein>
    <recommendedName>
        <fullName evidence="1">Putative 3-methyladenine DNA glycosylase</fullName>
        <ecNumber evidence="1">3.2.2.-</ecNumber>
    </recommendedName>
</protein>
<comment type="similarity">
    <text evidence="1">Belongs to the DNA glycosylase MPG family.</text>
</comment>
<accession>Q48DL2</accession>
<feature type="chain" id="PRO_1000191299" description="Putative 3-methyladenine DNA glycosylase">
    <location>
        <begin position="1"/>
        <end position="223"/>
    </location>
</feature>
<dbReference type="EC" id="3.2.2.-" evidence="1"/>
<dbReference type="EMBL" id="CP000058">
    <property type="protein sequence ID" value="AAZ35939.1"/>
    <property type="molecule type" value="Genomic_DNA"/>
</dbReference>
<dbReference type="RefSeq" id="WP_004655663.1">
    <property type="nucleotide sequence ID" value="NC_005773.3"/>
</dbReference>
<dbReference type="SMR" id="Q48DL2"/>
<dbReference type="KEGG" id="psp:PSPPH_4413"/>
<dbReference type="eggNOG" id="COG2094">
    <property type="taxonomic scope" value="Bacteria"/>
</dbReference>
<dbReference type="HOGENOM" id="CLU_104187_0_0_6"/>
<dbReference type="Proteomes" id="UP000000551">
    <property type="component" value="Chromosome"/>
</dbReference>
<dbReference type="GO" id="GO:0003905">
    <property type="term" value="F:alkylbase DNA N-glycosylase activity"/>
    <property type="evidence" value="ECO:0007669"/>
    <property type="project" value="InterPro"/>
</dbReference>
<dbReference type="GO" id="GO:0003677">
    <property type="term" value="F:DNA binding"/>
    <property type="evidence" value="ECO:0007669"/>
    <property type="project" value="InterPro"/>
</dbReference>
<dbReference type="GO" id="GO:0006284">
    <property type="term" value="P:base-excision repair"/>
    <property type="evidence" value="ECO:0007669"/>
    <property type="project" value="InterPro"/>
</dbReference>
<dbReference type="CDD" id="cd00540">
    <property type="entry name" value="AAG"/>
    <property type="match status" value="1"/>
</dbReference>
<dbReference type="Gene3D" id="3.10.300.10">
    <property type="entry name" value="Methylpurine-DNA glycosylase (MPG)"/>
    <property type="match status" value="1"/>
</dbReference>
<dbReference type="HAMAP" id="MF_00527">
    <property type="entry name" value="3MGH"/>
    <property type="match status" value="1"/>
</dbReference>
<dbReference type="InterPro" id="IPR011034">
    <property type="entry name" value="Formyl_transferase-like_C_sf"/>
</dbReference>
<dbReference type="InterPro" id="IPR003180">
    <property type="entry name" value="MPG"/>
</dbReference>
<dbReference type="InterPro" id="IPR036995">
    <property type="entry name" value="MPG_sf"/>
</dbReference>
<dbReference type="NCBIfam" id="NF002005">
    <property type="entry name" value="PRK00802.1-5"/>
    <property type="match status" value="1"/>
</dbReference>
<dbReference type="PANTHER" id="PTHR10429">
    <property type="entry name" value="DNA-3-METHYLADENINE GLYCOSYLASE"/>
    <property type="match status" value="1"/>
</dbReference>
<dbReference type="PANTHER" id="PTHR10429:SF0">
    <property type="entry name" value="DNA-3-METHYLADENINE GLYCOSYLASE"/>
    <property type="match status" value="1"/>
</dbReference>
<dbReference type="Pfam" id="PF02245">
    <property type="entry name" value="Pur_DNA_glyco"/>
    <property type="match status" value="1"/>
</dbReference>
<dbReference type="SUPFAM" id="SSF50486">
    <property type="entry name" value="FMT C-terminal domain-like"/>
    <property type="match status" value="1"/>
</dbReference>
<reference key="1">
    <citation type="journal article" date="2005" name="J. Bacteriol.">
        <title>Whole-genome sequence analysis of Pseudomonas syringae pv. phaseolicola 1448A reveals divergence among pathovars in genes involved in virulence and transposition.</title>
        <authorList>
            <person name="Joardar V."/>
            <person name="Lindeberg M."/>
            <person name="Jackson R.W."/>
            <person name="Selengut J."/>
            <person name="Dodson R."/>
            <person name="Brinkac L.M."/>
            <person name="Daugherty S.C."/>
            <person name="DeBoy R.T."/>
            <person name="Durkin A.S."/>
            <person name="Gwinn Giglio M."/>
            <person name="Madupu R."/>
            <person name="Nelson W.C."/>
            <person name="Rosovitz M.J."/>
            <person name="Sullivan S.A."/>
            <person name="Crabtree J."/>
            <person name="Creasy T."/>
            <person name="Davidsen T.M."/>
            <person name="Haft D.H."/>
            <person name="Zafar N."/>
            <person name="Zhou L."/>
            <person name="Halpin R."/>
            <person name="Holley T."/>
            <person name="Khouri H.M."/>
            <person name="Feldblyum T.V."/>
            <person name="White O."/>
            <person name="Fraser C.M."/>
            <person name="Chatterjee A.K."/>
            <person name="Cartinhour S."/>
            <person name="Schneider D."/>
            <person name="Mansfield J.W."/>
            <person name="Collmer A."/>
            <person name="Buell R."/>
        </authorList>
    </citation>
    <scope>NUCLEOTIDE SEQUENCE [LARGE SCALE GENOMIC DNA]</scope>
    <source>
        <strain>1448A / Race 6</strain>
    </source>
</reference>